<keyword id="KW-0010">Activator</keyword>
<keyword id="KW-0025">Alternative splicing</keyword>
<keyword id="KW-0238">DNA-binding</keyword>
<keyword id="KW-0539">Nucleus</keyword>
<keyword id="KW-1185">Reference proteome</keyword>
<keyword id="KW-0804">Transcription</keyword>
<keyword id="KW-0805">Transcription regulation</keyword>
<organism>
    <name type="scientific">Arabidopsis thaliana</name>
    <name type="common">Mouse-ear cress</name>
    <dbReference type="NCBI Taxonomy" id="3702"/>
    <lineage>
        <taxon>Eukaryota</taxon>
        <taxon>Viridiplantae</taxon>
        <taxon>Streptophyta</taxon>
        <taxon>Embryophyta</taxon>
        <taxon>Tracheophyta</taxon>
        <taxon>Spermatophyta</taxon>
        <taxon>Magnoliopsida</taxon>
        <taxon>eudicotyledons</taxon>
        <taxon>Gunneridae</taxon>
        <taxon>Pentapetalae</taxon>
        <taxon>rosids</taxon>
        <taxon>malvids</taxon>
        <taxon>Brassicales</taxon>
        <taxon>Brassicaceae</taxon>
        <taxon>Camelineae</taxon>
        <taxon>Arabidopsis</taxon>
    </lineage>
</organism>
<proteinExistence type="evidence at protein level"/>
<accession>Q93XM6</accession>
<accession>Q0WT94</accession>
<accession>Q56W43</accession>
<accession>Q9SGC7</accession>
<accession>Q9SJF8</accession>
<evidence type="ECO:0000250" key="1">
    <source>
        <dbReference type="UniProtKB" id="Q39140"/>
    </source>
</evidence>
<evidence type="ECO:0000255" key="2">
    <source>
        <dbReference type="PROSITE-ProRule" id="PRU00768"/>
    </source>
</evidence>
<evidence type="ECO:0000255" key="3">
    <source>
        <dbReference type="PROSITE-ProRule" id="PRU00978"/>
    </source>
</evidence>
<evidence type="ECO:0000255" key="4">
    <source>
        <dbReference type="PROSITE-ProRule" id="PRU01147"/>
    </source>
</evidence>
<evidence type="ECO:0000256" key="5">
    <source>
        <dbReference type="SAM" id="MobiDB-lite"/>
    </source>
</evidence>
<evidence type="ECO:0000269" key="6">
    <source>
    </source>
</evidence>
<evidence type="ECO:0000269" key="7">
    <source>
    </source>
</evidence>
<evidence type="ECO:0000269" key="8">
    <source>
    </source>
</evidence>
<evidence type="ECO:0000303" key="9">
    <source>
    </source>
</evidence>
<evidence type="ECO:0000303" key="10">
    <source>
    </source>
</evidence>
<evidence type="ECO:0000305" key="11"/>
<evidence type="ECO:0000312" key="12">
    <source>
        <dbReference type="Araport" id="AT1G08320"/>
    </source>
</evidence>
<evidence type="ECO:0000312" key="13">
    <source>
        <dbReference type="EMBL" id="AAF18246.1"/>
    </source>
</evidence>
<evidence type="ECO:0000312" key="14">
    <source>
        <dbReference type="EMBL" id="AAF22906.1"/>
    </source>
</evidence>
<dbReference type="EMBL" id="AJ314757">
    <property type="protein sequence ID" value="CAC40022.1"/>
    <property type="molecule type" value="mRNA"/>
</dbReference>
<dbReference type="EMBL" id="HQ132743">
    <property type="protein sequence ID" value="ADO95300.1"/>
    <property type="molecule type" value="mRNA"/>
</dbReference>
<dbReference type="EMBL" id="AC006932">
    <property type="protein sequence ID" value="AAF22906.1"/>
    <property type="status" value="ALT_SEQ"/>
    <property type="molecule type" value="Genomic_DNA"/>
</dbReference>
<dbReference type="EMBL" id="AC011438">
    <property type="protein sequence ID" value="AAF18246.1"/>
    <property type="status" value="ALT_SEQ"/>
    <property type="molecule type" value="Genomic_DNA"/>
</dbReference>
<dbReference type="EMBL" id="CP002684">
    <property type="protein sequence ID" value="AEE28275.1"/>
    <property type="molecule type" value="Genomic_DNA"/>
</dbReference>
<dbReference type="EMBL" id="CP002684">
    <property type="protein sequence ID" value="AEE28276.1"/>
    <property type="molecule type" value="Genomic_DNA"/>
</dbReference>
<dbReference type="EMBL" id="CP002684">
    <property type="protein sequence ID" value="AEE28277.1"/>
    <property type="molecule type" value="Genomic_DNA"/>
</dbReference>
<dbReference type="EMBL" id="CP002684">
    <property type="protein sequence ID" value="ANM59112.1"/>
    <property type="molecule type" value="Genomic_DNA"/>
</dbReference>
<dbReference type="EMBL" id="CP002684">
    <property type="protein sequence ID" value="ANM59113.1"/>
    <property type="molecule type" value="Genomic_DNA"/>
</dbReference>
<dbReference type="EMBL" id="AK222204">
    <property type="protein sequence ID" value="BAD95356.1"/>
    <property type="molecule type" value="mRNA"/>
</dbReference>
<dbReference type="EMBL" id="AK227667">
    <property type="protein sequence ID" value="BAE99654.1"/>
    <property type="molecule type" value="mRNA"/>
</dbReference>
<dbReference type="RefSeq" id="NP_001030998.1">
    <molecule id="Q93XM6-2"/>
    <property type="nucleotide sequence ID" value="NM_001035921.3"/>
</dbReference>
<dbReference type="RefSeq" id="NP_001030999.1">
    <molecule id="Q93XM6-1"/>
    <property type="nucleotide sequence ID" value="NM_001035922.1"/>
</dbReference>
<dbReference type="RefSeq" id="NP_001318954.1">
    <molecule id="Q93XM6-2"/>
    <property type="nucleotide sequence ID" value="NM_001331769.1"/>
</dbReference>
<dbReference type="RefSeq" id="NP_001321503.1">
    <molecule id="Q93XM6-1"/>
    <property type="nucleotide sequence ID" value="NM_001331770.1"/>
</dbReference>
<dbReference type="RefSeq" id="NP_563810.2">
    <molecule id="Q93XM6-1"/>
    <property type="nucleotide sequence ID" value="NM_100705.4"/>
</dbReference>
<dbReference type="SMR" id="Q93XM6"/>
<dbReference type="FunCoup" id="Q93XM6">
    <property type="interactions" value="375"/>
</dbReference>
<dbReference type="IntAct" id="Q93XM6">
    <property type="interactions" value="38"/>
</dbReference>
<dbReference type="STRING" id="3702.Q93XM6"/>
<dbReference type="iPTMnet" id="Q93XM6"/>
<dbReference type="PaxDb" id="3702-AT1G08320.3"/>
<dbReference type="ProteomicsDB" id="234230">
    <molecule id="Q93XM6-1"/>
</dbReference>
<dbReference type="EnsemblPlants" id="AT1G08320.1">
    <molecule id="Q93XM6-1"/>
    <property type="protein sequence ID" value="AT1G08320.1"/>
    <property type="gene ID" value="AT1G08320"/>
</dbReference>
<dbReference type="EnsemblPlants" id="AT1G08320.2">
    <molecule id="Q93XM6-2"/>
    <property type="protein sequence ID" value="AT1G08320.2"/>
    <property type="gene ID" value="AT1G08320"/>
</dbReference>
<dbReference type="EnsemblPlants" id="AT1G08320.3">
    <molecule id="Q93XM6-1"/>
    <property type="protein sequence ID" value="AT1G08320.3"/>
    <property type="gene ID" value="AT1G08320"/>
</dbReference>
<dbReference type="EnsemblPlants" id="AT1G08320.4">
    <molecule id="Q93XM6-1"/>
    <property type="protein sequence ID" value="AT1G08320.4"/>
    <property type="gene ID" value="AT1G08320"/>
</dbReference>
<dbReference type="EnsemblPlants" id="AT1G08320.5">
    <molecule id="Q93XM6-2"/>
    <property type="protein sequence ID" value="AT1G08320.5"/>
    <property type="gene ID" value="AT1G08320"/>
</dbReference>
<dbReference type="GeneID" id="837353"/>
<dbReference type="Gramene" id="AT1G08320.1">
    <molecule id="Q93XM6-1"/>
    <property type="protein sequence ID" value="AT1G08320.1"/>
    <property type="gene ID" value="AT1G08320"/>
</dbReference>
<dbReference type="Gramene" id="AT1G08320.2">
    <molecule id="Q93XM6-2"/>
    <property type="protein sequence ID" value="AT1G08320.2"/>
    <property type="gene ID" value="AT1G08320"/>
</dbReference>
<dbReference type="Gramene" id="AT1G08320.3">
    <molecule id="Q93XM6-1"/>
    <property type="protein sequence ID" value="AT1G08320.3"/>
    <property type="gene ID" value="AT1G08320"/>
</dbReference>
<dbReference type="Gramene" id="AT1G08320.4">
    <molecule id="Q93XM6-1"/>
    <property type="protein sequence ID" value="AT1G08320.4"/>
    <property type="gene ID" value="AT1G08320"/>
</dbReference>
<dbReference type="Gramene" id="AT1G08320.5">
    <molecule id="Q93XM6-2"/>
    <property type="protein sequence ID" value="AT1G08320.5"/>
    <property type="gene ID" value="AT1G08320"/>
</dbReference>
<dbReference type="KEGG" id="ath:AT1G08320"/>
<dbReference type="Araport" id="AT1G08320"/>
<dbReference type="TAIR" id="AT1G08320">
    <property type="gene designation" value="TGA9"/>
</dbReference>
<dbReference type="eggNOG" id="ENOG502QRFK">
    <property type="taxonomic scope" value="Eukaryota"/>
</dbReference>
<dbReference type="HOGENOM" id="CLU_024782_0_2_1"/>
<dbReference type="InParanoid" id="Q93XM6"/>
<dbReference type="OMA" id="HAHLPDS"/>
<dbReference type="OrthoDB" id="2015618at2759"/>
<dbReference type="PhylomeDB" id="Q93XM6"/>
<dbReference type="PRO" id="PR:Q93XM6"/>
<dbReference type="Proteomes" id="UP000006548">
    <property type="component" value="Chromosome 1"/>
</dbReference>
<dbReference type="ExpressionAtlas" id="Q93XM6">
    <property type="expression patterns" value="baseline and differential"/>
</dbReference>
<dbReference type="GO" id="GO:0005634">
    <property type="term" value="C:nucleus"/>
    <property type="evidence" value="ECO:0000314"/>
    <property type="project" value="UniProtKB"/>
</dbReference>
<dbReference type="GO" id="GO:0003700">
    <property type="term" value="F:DNA-binding transcription factor activity"/>
    <property type="evidence" value="ECO:0000250"/>
    <property type="project" value="TAIR"/>
</dbReference>
<dbReference type="GO" id="GO:0042803">
    <property type="term" value="F:protein homodimerization activity"/>
    <property type="evidence" value="ECO:0000314"/>
    <property type="project" value="UniProtKB"/>
</dbReference>
<dbReference type="GO" id="GO:0000976">
    <property type="term" value="F:transcription cis-regulatory region binding"/>
    <property type="evidence" value="ECO:0000353"/>
    <property type="project" value="TAIR"/>
</dbReference>
<dbReference type="GO" id="GO:0048653">
    <property type="term" value="P:anther development"/>
    <property type="evidence" value="ECO:0000315"/>
    <property type="project" value="UniProtKB"/>
</dbReference>
<dbReference type="GO" id="GO:0006351">
    <property type="term" value="P:DNA-templated transcription"/>
    <property type="evidence" value="ECO:0007669"/>
    <property type="project" value="InterPro"/>
</dbReference>
<dbReference type="GO" id="GO:0071588">
    <property type="term" value="P:hydrogen peroxide mediated signaling pathway"/>
    <property type="evidence" value="ECO:0000315"/>
    <property type="project" value="UniProtKB"/>
</dbReference>
<dbReference type="GO" id="GO:0002237">
    <property type="term" value="P:response to molecule of bacterial origin"/>
    <property type="evidence" value="ECO:0000315"/>
    <property type="project" value="UniProtKB"/>
</dbReference>
<dbReference type="CDD" id="cd14708">
    <property type="entry name" value="bZIP_HBP1b-like"/>
    <property type="match status" value="1"/>
</dbReference>
<dbReference type="FunFam" id="1.20.5.170:FF:000019">
    <property type="entry name" value="BZIP family transcription factor"/>
    <property type="match status" value="1"/>
</dbReference>
<dbReference type="Gene3D" id="1.20.5.170">
    <property type="match status" value="1"/>
</dbReference>
<dbReference type="InterPro" id="IPR004827">
    <property type="entry name" value="bZIP"/>
</dbReference>
<dbReference type="InterPro" id="IPR046347">
    <property type="entry name" value="bZIP_sf"/>
</dbReference>
<dbReference type="InterPro" id="IPR025422">
    <property type="entry name" value="TGA_domain"/>
</dbReference>
<dbReference type="PANTHER" id="PTHR45693">
    <property type="entry name" value="TRANSCRIPTION FACTOR TGA9"/>
    <property type="match status" value="1"/>
</dbReference>
<dbReference type="PANTHER" id="PTHR45693:SF9">
    <property type="entry name" value="TRANSCRIPTION FACTOR TGA9"/>
    <property type="match status" value="1"/>
</dbReference>
<dbReference type="Pfam" id="PF00170">
    <property type="entry name" value="bZIP_1"/>
    <property type="match status" value="1"/>
</dbReference>
<dbReference type="Pfam" id="PF14144">
    <property type="entry name" value="DOG1"/>
    <property type="match status" value="1"/>
</dbReference>
<dbReference type="SMART" id="SM00338">
    <property type="entry name" value="BRLZ"/>
    <property type="match status" value="1"/>
</dbReference>
<dbReference type="SUPFAM" id="SSF57959">
    <property type="entry name" value="Leucine zipper domain"/>
    <property type="match status" value="1"/>
</dbReference>
<dbReference type="PROSITE" id="PS50217">
    <property type="entry name" value="BZIP"/>
    <property type="match status" value="1"/>
</dbReference>
<dbReference type="PROSITE" id="PS00036">
    <property type="entry name" value="BZIP_BASIC"/>
    <property type="match status" value="1"/>
</dbReference>
<dbReference type="PROSITE" id="PS51806">
    <property type="entry name" value="DOG1"/>
    <property type="match status" value="1"/>
</dbReference>
<gene>
    <name evidence="10" type="primary">TGA9</name>
    <name evidence="9" type="synonym">BZIP21</name>
    <name evidence="12" type="ordered locus">At1g08320</name>
    <name evidence="13" type="ORF">T23G18.19</name>
    <name evidence="13" type="ORF">T23G18.22</name>
    <name evidence="14" type="ORF">T27G7.2</name>
</gene>
<sequence length="481" mass="53514">MANHRMSEATNHNHNHHLPYSLIHGLNNNHPSSGFINQDGSSSFDFGELEEAIVLQGVKYRNEEAKPPLLGGGGGATTLEMFPSWPIRTHQTLPTESSKSGGESSDSGSANFSGKAESQQPESPMSSKHHLMLQPHHNNMANSSSTSGLPSTSRTLAPPKPSEDKRKATTSGKQLDAKTLRRLAQNREAARKSRLRKKAYVQQLESSRIKLSQLEQELQRARSQGLFMGGCGPPGPNITSGAAIFDMEYGRWLEDDNRHMSEIRTGLQAHLSDNDLRLIVDGYIAHFDEIFRLKAVAAKADVFHLIIGTWMSPAERCFIWMAGFRPSDLIKILVSQMDLLTEQQLMGIYSLQHSSQQAEEALSQGLEQLQQSLIDTLAASPVIDGMQQMAVALGKISNLEGFIRQADNLRQQTVHQLRRILTVRQAARCFLVIGEYYGRLRALSSLWLSRPRETLMSDETSCQTTTDLQIVQSSRNHFSNF</sequence>
<name>TGA9_ARATH</name>
<comment type="function">
    <text evidence="7 8">Together with TGA10, basic leucine-zipper transcription factor required for anther development, probably via the activation of SPL expression in anthers and via the regulation of genes with functions in early and middle tapetal development (PubMed:20805327). Required for signaling responses to pathogen-associated molecular patterns (PAMPs) such as flg22 that involves chloroplastic reactive oxygen species (ROS) production and subsequent expression of H(2)O(2)-responsive genes (PubMed:27717447).</text>
</comment>
<comment type="subunit">
    <text evidence="1 6 7">Homodimer (PubMed:16731568). Binds DNA as a dimer (By similarity). Interacts with floral glutaredoxins GRXC7/ROXY1 and GRXC8/ROXY2 in the nucleus (PubMed:20805327). Interacts with TGA1, TGA2, TGA3, TGA4, TGA5, TGA6, TGA7, TGA10 and PAN (PubMed:16731568).</text>
</comment>
<comment type="interaction">
    <interactant intactId="EBI-1237844">
        <id>Q93XM6</id>
    </interactant>
    <interactant intactId="EBI-4441365">
        <id>Q8L746</id>
        <label>NPR3</label>
    </interactant>
    <organismsDiffer>false</organismsDiffer>
    <experiments>3</experiments>
</comment>
<comment type="interaction">
    <interactant intactId="EBI-1237844">
        <id>Q93XM6</id>
    </interactant>
    <interactant intactId="EBI-15192325">
        <id>Q8LPR5</id>
        <label>TCP4</label>
    </interactant>
    <organismsDiffer>false</organismsDiffer>
    <experiments>3</experiments>
</comment>
<comment type="interaction">
    <interactant intactId="EBI-1237844">
        <id>Q93XM6</id>
    </interactant>
    <interactant intactId="EBI-541307">
        <id>P43273</id>
        <label>TGA2</label>
    </interactant>
    <organismsDiffer>false</organismsDiffer>
    <experiments>4</experiments>
</comment>
<comment type="subcellular location">
    <subcellularLocation>
        <location evidence="2 3 7">Nucleus</location>
    </subcellularLocation>
</comment>
<comment type="alternative products">
    <event type="alternative splicing"/>
    <isoform>
        <id>Q93XM6-1</id>
        <name>1</name>
        <sequence type="displayed"/>
    </isoform>
    <isoform>
        <id>Q93XM6-2</id>
        <name>2</name>
        <sequence type="described" ref="VSP_058776"/>
    </isoform>
</comment>
<comment type="tissue specificity">
    <text evidence="7">Mostly expressed in stems, inflorescence apex and flowers, and, to a lower extent, in seedlings, leaves and siliques.</text>
</comment>
<comment type="developmental stage">
    <text evidence="7">During anther development, accumulates in anther primordia during archesporial cell specification and later present in a horseshoe pattern associated with the lateral and adaxial portion of primordia, prior to the emergence of distinct locules. Expressed throughout sporogenic tissue and surrounding cells layers in adaxial and adaxial locules. Localized to the tapetum and middle layers, gradually fading postmeiosis with degeneration of these cell layers.</text>
</comment>
<comment type="induction">
    <text evidence="8">Induced by flg22 in leaves.</text>
</comment>
<comment type="disruption phenotype">
    <text evidence="7 8">In the double mutant tga9 tga10, reduced male fertility due to defects in male gametogenesis, with early steps in anther development blocked in adaxial lobes and later steps affected in abaxial lobes. Microspore development in abaxial anther lobes leads to the production of inviable pollen grains contained within nondehiscent anthers. In addition, multiple defects in the anther dehiscence program are observed, including abnormal stability and lignification of the middle layer and defects in septum and stomium function. Reduced SPL levels in anthers (PubMed:20805327). Increased sensitivity to flg22 treatment associated with a lack of chloroplastic H(2)O(2)-responsive genes; this phenotype is enhanced in the double mutant tga9 tga10 (PubMed:27717447).</text>
</comment>
<comment type="similarity">
    <text evidence="11">Belongs to the bZIP family.</text>
</comment>
<comment type="sequence caution" evidence="11">
    <conflict type="erroneous gene model prediction">
        <sequence resource="EMBL-CDS" id="AAF18246"/>
    </conflict>
</comment>
<comment type="sequence caution" evidence="11">
    <conflict type="erroneous gene model prediction">
        <sequence resource="EMBL-CDS" id="AAF22906"/>
    </conflict>
</comment>
<reference key="1">
    <citation type="journal article" date="2002" name="Trends Plant Sci.">
        <title>bZIP transcription factors in Arabidopsis.</title>
        <authorList>
            <person name="Jakoby M."/>
            <person name="Weisshaar B."/>
            <person name="Droege-Laser W."/>
            <person name="Vicente-Carbajosa J."/>
            <person name="Tiedemann J."/>
            <person name="Kroj T."/>
            <person name="Parcy F."/>
        </authorList>
    </citation>
    <scope>NUCLEOTIDE SEQUENCE [MRNA] (ISOFORM 1)</scope>
    <scope>GENE FAMILY</scope>
    <scope>NOMENCLATURE</scope>
    <source>
        <strain>cv. Columbia</strain>
    </source>
</reference>
<reference key="2">
    <citation type="journal article" date="2010" name="Plant Physiol.">
        <title>Arabidopsis basic leucine-zipper transcription factors TGA9 and TGA10 interact with floral glutaredoxins ROXY1 and ROXY2 and are redundantly required for anther development.</title>
        <authorList>
            <person name="Murmu J."/>
            <person name="Bush M.J."/>
            <person name="Delong C."/>
            <person name="Li S."/>
            <person name="Xu M."/>
            <person name="Khan M."/>
            <person name="Malcolmson C."/>
            <person name="Fobert P.R."/>
            <person name="Zachgo S."/>
            <person name="Hepworth S.R."/>
        </authorList>
    </citation>
    <scope>NUCLEOTIDE SEQUENCE [MRNA] (ISOFORM 1)</scope>
    <scope>FUNCTION</scope>
    <scope>DISRUPTION PHENOTYPE</scope>
    <scope>INTERACTION WITH GRXC7/ROXY1 AND GRXC8/ROXY2</scope>
    <scope>DEVELOPMENTAL STAGE</scope>
    <scope>TISSUE SPECIFICITY</scope>
    <scope>SUBCELLULAR LOCATION</scope>
    <source>
        <strain>cv. Columbia</strain>
    </source>
</reference>
<reference key="3">
    <citation type="journal article" date="2000" name="Nature">
        <title>Sequence and analysis of chromosome 1 of the plant Arabidopsis thaliana.</title>
        <authorList>
            <person name="Theologis A."/>
            <person name="Ecker J.R."/>
            <person name="Palm C.J."/>
            <person name="Federspiel N.A."/>
            <person name="Kaul S."/>
            <person name="White O."/>
            <person name="Alonso J."/>
            <person name="Altafi H."/>
            <person name="Araujo R."/>
            <person name="Bowman C.L."/>
            <person name="Brooks S.Y."/>
            <person name="Buehler E."/>
            <person name="Chan A."/>
            <person name="Chao Q."/>
            <person name="Chen H."/>
            <person name="Cheuk R.F."/>
            <person name="Chin C.W."/>
            <person name="Chung M.K."/>
            <person name="Conn L."/>
            <person name="Conway A.B."/>
            <person name="Conway A.R."/>
            <person name="Creasy T.H."/>
            <person name="Dewar K."/>
            <person name="Dunn P."/>
            <person name="Etgu P."/>
            <person name="Feldblyum T.V."/>
            <person name="Feng J.-D."/>
            <person name="Fong B."/>
            <person name="Fujii C.Y."/>
            <person name="Gill J.E."/>
            <person name="Goldsmith A.D."/>
            <person name="Haas B."/>
            <person name="Hansen N.F."/>
            <person name="Hughes B."/>
            <person name="Huizar L."/>
            <person name="Hunter J.L."/>
            <person name="Jenkins J."/>
            <person name="Johnson-Hopson C."/>
            <person name="Khan S."/>
            <person name="Khaykin E."/>
            <person name="Kim C.J."/>
            <person name="Koo H.L."/>
            <person name="Kremenetskaia I."/>
            <person name="Kurtz D.B."/>
            <person name="Kwan A."/>
            <person name="Lam B."/>
            <person name="Langin-Hooper S."/>
            <person name="Lee A."/>
            <person name="Lee J.M."/>
            <person name="Lenz C.A."/>
            <person name="Li J.H."/>
            <person name="Li Y.-P."/>
            <person name="Lin X."/>
            <person name="Liu S.X."/>
            <person name="Liu Z.A."/>
            <person name="Luros J.S."/>
            <person name="Maiti R."/>
            <person name="Marziali A."/>
            <person name="Militscher J."/>
            <person name="Miranda M."/>
            <person name="Nguyen M."/>
            <person name="Nierman W.C."/>
            <person name="Osborne B.I."/>
            <person name="Pai G."/>
            <person name="Peterson J."/>
            <person name="Pham P.K."/>
            <person name="Rizzo M."/>
            <person name="Rooney T."/>
            <person name="Rowley D."/>
            <person name="Sakano H."/>
            <person name="Salzberg S.L."/>
            <person name="Schwartz J.R."/>
            <person name="Shinn P."/>
            <person name="Southwick A.M."/>
            <person name="Sun H."/>
            <person name="Tallon L.J."/>
            <person name="Tambunga G."/>
            <person name="Toriumi M.J."/>
            <person name="Town C.D."/>
            <person name="Utterback T."/>
            <person name="Van Aken S."/>
            <person name="Vaysberg M."/>
            <person name="Vysotskaia V.S."/>
            <person name="Walker M."/>
            <person name="Wu D."/>
            <person name="Yu G."/>
            <person name="Fraser C.M."/>
            <person name="Venter J.C."/>
            <person name="Davis R.W."/>
        </authorList>
    </citation>
    <scope>NUCLEOTIDE SEQUENCE [LARGE SCALE GENOMIC DNA]</scope>
    <source>
        <strain>cv. Columbia</strain>
    </source>
</reference>
<reference key="4">
    <citation type="journal article" date="2017" name="Plant J.">
        <title>Araport11: a complete reannotation of the Arabidopsis thaliana reference genome.</title>
        <authorList>
            <person name="Cheng C.Y."/>
            <person name="Krishnakumar V."/>
            <person name="Chan A.P."/>
            <person name="Thibaud-Nissen F."/>
            <person name="Schobel S."/>
            <person name="Town C.D."/>
        </authorList>
    </citation>
    <scope>GENOME REANNOTATION</scope>
    <source>
        <strain>cv. Columbia</strain>
    </source>
</reference>
<reference key="5">
    <citation type="submission" date="2005-03" db="EMBL/GenBank/DDBJ databases">
        <title>Large-scale analysis of RIKEN Arabidopsis full-length (RAFL) cDNAs.</title>
        <authorList>
            <person name="Totoki Y."/>
            <person name="Seki M."/>
            <person name="Ishida J."/>
            <person name="Nakajima M."/>
            <person name="Enju A."/>
            <person name="Kamiya A."/>
            <person name="Narusaka M."/>
            <person name="Shin-i T."/>
            <person name="Nakagawa M."/>
            <person name="Sakamoto N."/>
            <person name="Oishi K."/>
            <person name="Kohara Y."/>
            <person name="Kobayashi M."/>
            <person name="Toyoda A."/>
            <person name="Sakaki Y."/>
            <person name="Sakurai T."/>
            <person name="Iida K."/>
            <person name="Akiyama K."/>
            <person name="Satou M."/>
            <person name="Toyoda T."/>
            <person name="Konagaya A."/>
            <person name="Carninci P."/>
            <person name="Kawai J."/>
            <person name="Hayashizaki Y."/>
            <person name="Shinozaki K."/>
        </authorList>
    </citation>
    <scope>NUCLEOTIDE SEQUENCE [LARGE SCALE MRNA] (ISOFORMS 1 AND 2)</scope>
    <source>
        <strain>cv. Columbia</strain>
    </source>
</reference>
<reference key="6">
    <citation type="journal article" date="2004" name="Nucleic Acids Res.">
        <title>Dimerization specificity of all 67 B-ZIP motifs in Arabidopsis thaliana: a comparison to Homo sapiens B-ZIP motifs.</title>
        <authorList>
            <person name="Deppmann C.D."/>
            <person name="Acharya A."/>
            <person name="Rishi V."/>
            <person name="Wobbes B."/>
            <person name="Smeekens S."/>
            <person name="Taparowsky E.J."/>
            <person name="Vinson C."/>
        </authorList>
    </citation>
    <scope>GENE FAMILY</scope>
</reference>
<reference key="7">
    <citation type="journal article" date="2006" name="Mol. Biol. Evol.">
        <title>Cross-species annotation of basic leucine zipper factor interactions: Insight into the evolution of closed interaction networks.</title>
        <authorList>
            <person name="Deppmann C.D."/>
            <person name="Alvania R.S."/>
            <person name="Taparowsky E.J."/>
        </authorList>
    </citation>
    <scope>INTERACTION WITH TGA1; TGA2; TGA3; TGA4; TGA5; TGA6; TGA7; TGA10 AND PAN</scope>
    <scope>SUBUNIT</scope>
</reference>
<reference key="8">
    <citation type="journal article" date="2016" name="Plant Sci.">
        <title>Arabidopsis clade IV TGA transcription factors, TGA10 and TGA9, are involved in ROS-mediated responses to bacterial PAMP flg22.</title>
        <authorList>
            <person name="Noshi M."/>
            <person name="Mori D."/>
            <person name="Tanabe N."/>
            <person name="Maruta T."/>
            <person name="Shigeoka S."/>
        </authorList>
    </citation>
    <scope>FUNCTION</scope>
    <scope>DISRUPTION PHENOTYPE</scope>
    <scope>INDUCTION BY FLG22</scope>
    <source>
        <strain>cv. Columbia</strain>
    </source>
</reference>
<feature type="chain" id="PRO_0000438993" description="Transcription factor TGA9">
    <location>
        <begin position="1"/>
        <end position="481"/>
    </location>
</feature>
<feature type="domain" description="bZIP" evidence="3">
    <location>
        <begin position="176"/>
        <end position="220"/>
    </location>
</feature>
<feature type="domain" description="DOG1" evidence="4">
    <location>
        <begin position="242"/>
        <end position="450"/>
    </location>
</feature>
<feature type="region of interest" description="Disordered" evidence="5">
    <location>
        <begin position="91"/>
        <end position="181"/>
    </location>
</feature>
<feature type="region of interest" description="Basic motif" evidence="3">
    <location>
        <begin position="178"/>
        <end position="198"/>
    </location>
</feature>
<feature type="region of interest" description="Leucine-zipper" evidence="3">
    <location>
        <begin position="204"/>
        <end position="218"/>
    </location>
</feature>
<feature type="short sequence motif" description="Nuclear localization signal" evidence="2">
    <location>
        <begin position="165"/>
        <end position="172"/>
    </location>
</feature>
<feature type="compositionally biased region" description="Low complexity" evidence="5">
    <location>
        <begin position="97"/>
        <end position="109"/>
    </location>
</feature>
<feature type="compositionally biased region" description="Polar residues" evidence="5">
    <location>
        <begin position="110"/>
        <end position="126"/>
    </location>
</feature>
<feature type="compositionally biased region" description="Low complexity" evidence="5">
    <location>
        <begin position="143"/>
        <end position="155"/>
    </location>
</feature>
<feature type="splice variant" id="VSP_058776" description="In isoform 2.">
    <location>
        <begin position="1"/>
        <end position="124"/>
    </location>
</feature>
<feature type="sequence conflict" description="In Ref. 5; BAE99654." evidence="11" ref="5">
    <original>F</original>
    <variation>L</variation>
    <location>
        <position position="402"/>
    </location>
</feature>
<protein>
    <recommendedName>
        <fullName evidence="10">Transcription factor TGA9</fullName>
    </recommendedName>
    <alternativeName>
        <fullName evidence="10">Protein TGACG (TGA) motif-binding protein 9</fullName>
    </alternativeName>
    <alternativeName>
        <fullName evidence="9">bZIP transcription factor 21</fullName>
        <shortName evidence="9">AtbZIP21</shortName>
    </alternativeName>
</protein>